<feature type="chain" id="PRO_0000066646" description="Glutathione peroxidase 1">
    <location>
        <begin position="1"/>
        <end position="163"/>
    </location>
</feature>
<feature type="active site" evidence="1">
    <location>
        <position position="36"/>
    </location>
</feature>
<protein>
    <recommendedName>
        <fullName>Glutathione peroxidase 1</fullName>
        <ecNumber>1.11.1.9</ecNumber>
    </recommendedName>
</protein>
<reference key="1">
    <citation type="journal article" date="1998" name="Science">
        <title>Genome sequence of the nematode C. elegans: a platform for investigating biology.</title>
        <authorList>
            <consortium name="The C. elegans sequencing consortium"/>
        </authorList>
    </citation>
    <scope>NUCLEOTIDE SEQUENCE [LARGE SCALE GENOMIC DNA]</scope>
    <source>
        <strain>Bristol N2</strain>
    </source>
</reference>
<organism>
    <name type="scientific">Caenorhabditis elegans</name>
    <dbReference type="NCBI Taxonomy" id="6239"/>
    <lineage>
        <taxon>Eukaryota</taxon>
        <taxon>Metazoa</taxon>
        <taxon>Ecdysozoa</taxon>
        <taxon>Nematoda</taxon>
        <taxon>Chromadorea</taxon>
        <taxon>Rhabditida</taxon>
        <taxon>Rhabditina</taxon>
        <taxon>Rhabditomorpha</taxon>
        <taxon>Rhabditoidea</taxon>
        <taxon>Rhabditidae</taxon>
        <taxon>Peloderinae</taxon>
        <taxon>Caenorhabditis</taxon>
    </lineage>
</organism>
<proteinExistence type="inferred from homology"/>
<gene>
    <name type="primary">gpx-1</name>
    <name type="ORF">F26E4.12</name>
</gene>
<name>GPX1_CAEEL</name>
<dbReference type="EC" id="1.11.1.9"/>
<dbReference type="EMBL" id="Z81070">
    <property type="protein sequence ID" value="CAB03004.1"/>
    <property type="molecule type" value="Genomic_DNA"/>
</dbReference>
<dbReference type="PIR" id="T21418">
    <property type="entry name" value="T21418"/>
</dbReference>
<dbReference type="RefSeq" id="NP_492598.1">
    <property type="nucleotide sequence ID" value="NM_060197.3"/>
</dbReference>
<dbReference type="SMR" id="O02621"/>
<dbReference type="BioGRID" id="49762">
    <property type="interactions" value="13"/>
</dbReference>
<dbReference type="FunCoup" id="O02621">
    <property type="interactions" value="1824"/>
</dbReference>
<dbReference type="STRING" id="6239.F26E4.12.1"/>
<dbReference type="PeroxiBase" id="3746">
    <property type="entry name" value="CelGPx01"/>
</dbReference>
<dbReference type="PaxDb" id="6239-F26E4.12"/>
<dbReference type="PeptideAtlas" id="O02621"/>
<dbReference type="EnsemblMetazoa" id="F26E4.12.1">
    <property type="protein sequence ID" value="F26E4.12.1"/>
    <property type="gene ID" value="WBGene00009165"/>
</dbReference>
<dbReference type="GeneID" id="184981"/>
<dbReference type="KEGG" id="cel:CELE_F26E4.12"/>
<dbReference type="UCSC" id="F26E4.12">
    <property type="organism name" value="c. elegans"/>
</dbReference>
<dbReference type="AGR" id="WB:WBGene00009165"/>
<dbReference type="CTD" id="184981"/>
<dbReference type="WormBase" id="F26E4.12">
    <property type="protein sequence ID" value="CE09696"/>
    <property type="gene ID" value="WBGene00009165"/>
    <property type="gene designation" value="gpx-1"/>
</dbReference>
<dbReference type="eggNOG" id="KOG1651">
    <property type="taxonomic scope" value="Eukaryota"/>
</dbReference>
<dbReference type="HOGENOM" id="CLU_029507_0_1_1"/>
<dbReference type="InParanoid" id="O02621"/>
<dbReference type="OMA" id="CSHSAQL"/>
<dbReference type="OrthoDB" id="446890at2759"/>
<dbReference type="PhylomeDB" id="O02621"/>
<dbReference type="PRO" id="PR:O02621"/>
<dbReference type="Proteomes" id="UP000001940">
    <property type="component" value="Chromosome I"/>
</dbReference>
<dbReference type="Bgee" id="WBGene00009165">
    <property type="expression patterns" value="Expressed in embryo and 4 other cell types or tissues"/>
</dbReference>
<dbReference type="GO" id="GO:0005829">
    <property type="term" value="C:cytosol"/>
    <property type="evidence" value="ECO:0000314"/>
    <property type="project" value="WormBase"/>
</dbReference>
<dbReference type="GO" id="GO:0005634">
    <property type="term" value="C:nucleus"/>
    <property type="evidence" value="ECO:0000314"/>
    <property type="project" value="WormBase"/>
</dbReference>
<dbReference type="GO" id="GO:0004602">
    <property type="term" value="F:glutathione peroxidase activity"/>
    <property type="evidence" value="ECO:0007669"/>
    <property type="project" value="UniProtKB-EC"/>
</dbReference>
<dbReference type="GO" id="GO:0004601">
    <property type="term" value="F:peroxidase activity"/>
    <property type="evidence" value="ECO:0000318"/>
    <property type="project" value="GO_Central"/>
</dbReference>
<dbReference type="GO" id="GO:0047066">
    <property type="term" value="F:phospholipid-hydroperoxide glutathione peroxidase activity"/>
    <property type="evidence" value="ECO:0000315"/>
    <property type="project" value="WormBase"/>
</dbReference>
<dbReference type="GO" id="GO:0034614">
    <property type="term" value="P:cellular response to reactive oxygen species"/>
    <property type="evidence" value="ECO:0000315"/>
    <property type="project" value="WormBase"/>
</dbReference>
<dbReference type="GO" id="GO:0045087">
    <property type="term" value="P:innate immune response"/>
    <property type="evidence" value="ECO:0007007"/>
    <property type="project" value="WormBase"/>
</dbReference>
<dbReference type="GO" id="GO:0090087">
    <property type="term" value="P:regulation of peptide transport"/>
    <property type="evidence" value="ECO:0000315"/>
    <property type="project" value="WormBase"/>
</dbReference>
<dbReference type="CDD" id="cd00340">
    <property type="entry name" value="GSH_Peroxidase"/>
    <property type="match status" value="1"/>
</dbReference>
<dbReference type="FunFam" id="3.40.30.10:FF:000270">
    <property type="entry name" value="Glutathione peroxidase"/>
    <property type="match status" value="1"/>
</dbReference>
<dbReference type="Gene3D" id="3.40.30.10">
    <property type="entry name" value="Glutaredoxin"/>
    <property type="match status" value="1"/>
</dbReference>
<dbReference type="InterPro" id="IPR000889">
    <property type="entry name" value="Glutathione_peroxidase"/>
</dbReference>
<dbReference type="InterPro" id="IPR029759">
    <property type="entry name" value="GPX_AS"/>
</dbReference>
<dbReference type="InterPro" id="IPR029760">
    <property type="entry name" value="GPX_CS"/>
</dbReference>
<dbReference type="InterPro" id="IPR036249">
    <property type="entry name" value="Thioredoxin-like_sf"/>
</dbReference>
<dbReference type="InterPro" id="IPR013766">
    <property type="entry name" value="Thioredoxin_domain"/>
</dbReference>
<dbReference type="PANTHER" id="PTHR11592">
    <property type="entry name" value="GLUTATHIONE PEROXIDASE"/>
    <property type="match status" value="1"/>
</dbReference>
<dbReference type="PANTHER" id="PTHR11592:SF49">
    <property type="entry name" value="GLUTATHIONE PEROXIDASE 1"/>
    <property type="match status" value="1"/>
</dbReference>
<dbReference type="Pfam" id="PF00255">
    <property type="entry name" value="GSHPx"/>
    <property type="match status" value="1"/>
</dbReference>
<dbReference type="PIRSF" id="PIRSF000303">
    <property type="entry name" value="Glutathion_perox"/>
    <property type="match status" value="1"/>
</dbReference>
<dbReference type="PRINTS" id="PR01011">
    <property type="entry name" value="GLUTPROXDASE"/>
</dbReference>
<dbReference type="SUPFAM" id="SSF52833">
    <property type="entry name" value="Thioredoxin-like"/>
    <property type="match status" value="1"/>
</dbReference>
<dbReference type="PROSITE" id="PS00460">
    <property type="entry name" value="GLUTATHIONE_PEROXID_1"/>
    <property type="match status" value="1"/>
</dbReference>
<dbReference type="PROSITE" id="PS00763">
    <property type="entry name" value="GLUTATHIONE_PEROXID_2"/>
    <property type="match status" value="1"/>
</dbReference>
<dbReference type="PROSITE" id="PS51355">
    <property type="entry name" value="GLUTATHIONE_PEROXID_3"/>
    <property type="match status" value="1"/>
</dbReference>
<keyword id="KW-0963">Cytoplasm</keyword>
<keyword id="KW-0560">Oxidoreductase</keyword>
<keyword id="KW-0575">Peroxidase</keyword>
<keyword id="KW-1185">Reference proteome</keyword>
<accession>O02621</accession>
<evidence type="ECO:0000250" key="1"/>
<evidence type="ECO:0000305" key="2"/>
<sequence>MSSVYDFNVKNANGDDVSLSDYKGKVLIIVNVASQCGLTNKNYTQLKELLDVYKKDGLEVLAFPCNQFAGQEPSCEIDIQAFVADKFKFEPTLFQKIDVNGDKQSPLFKFLKNEKGGFMFDAIKWNFTKFLVGRDGKIIKRFGPTTDPKDMEKDIKEALGEKL</sequence>
<comment type="function">
    <text evidence="1">May constitute a glutathione peroxidase-like protective system against oxidative stresses.</text>
</comment>
<comment type="catalytic activity">
    <reaction>
        <text>2 glutathione + H2O2 = glutathione disulfide + 2 H2O</text>
        <dbReference type="Rhea" id="RHEA:16833"/>
        <dbReference type="ChEBI" id="CHEBI:15377"/>
        <dbReference type="ChEBI" id="CHEBI:16240"/>
        <dbReference type="ChEBI" id="CHEBI:57925"/>
        <dbReference type="ChEBI" id="CHEBI:58297"/>
        <dbReference type="EC" id="1.11.1.9"/>
    </reaction>
</comment>
<comment type="subcellular location">
    <subcellularLocation>
        <location evidence="2">Cytoplasm</location>
    </subcellularLocation>
</comment>
<comment type="similarity">
    <text evidence="2">Belongs to the glutathione peroxidase family.</text>
</comment>